<evidence type="ECO:0000255" key="1">
    <source>
        <dbReference type="HAMAP-Rule" id="MF_01080"/>
    </source>
</evidence>
<gene>
    <name evidence="1" type="primary">truB</name>
    <name type="ordered locus">Ccon26_12020</name>
    <name type="ORF">CCC13826_0063</name>
</gene>
<protein>
    <recommendedName>
        <fullName evidence="1">tRNA pseudouridine synthase B</fullName>
        <ecNumber evidence="1">5.4.99.25</ecNumber>
    </recommendedName>
    <alternativeName>
        <fullName evidence="1">tRNA pseudouridine(55) synthase</fullName>
        <shortName evidence="1">Psi55 synthase</shortName>
    </alternativeName>
    <alternativeName>
        <fullName evidence="1">tRNA pseudouridylate synthase</fullName>
    </alternativeName>
    <alternativeName>
        <fullName evidence="1">tRNA-uridine isomerase</fullName>
    </alternativeName>
</protein>
<reference key="1">
    <citation type="submission" date="2007-10" db="EMBL/GenBank/DDBJ databases">
        <title>Genome sequence of Campylobacter concisus 13826 isolated from human feces.</title>
        <authorList>
            <person name="Fouts D.E."/>
            <person name="Mongodin E.F."/>
            <person name="Puiu D."/>
            <person name="Sebastian Y."/>
            <person name="Miller W.G."/>
            <person name="Mandrell R.E."/>
            <person name="On S."/>
            <person name="Nelson K.E."/>
        </authorList>
    </citation>
    <scope>NUCLEOTIDE SEQUENCE [LARGE SCALE GENOMIC DNA]</scope>
    <source>
        <strain>13826</strain>
    </source>
</reference>
<accession>A7ZE50</accession>
<dbReference type="EC" id="5.4.99.25" evidence="1"/>
<dbReference type="EMBL" id="CP000792">
    <property type="protein sequence ID" value="EAT97791.1"/>
    <property type="molecule type" value="Genomic_DNA"/>
</dbReference>
<dbReference type="RefSeq" id="WP_012139977.1">
    <property type="nucleotide sequence ID" value="NC_009802.2"/>
</dbReference>
<dbReference type="SMR" id="A7ZE50"/>
<dbReference type="STRING" id="360104.CCC13826_0063"/>
<dbReference type="KEGG" id="cco:CCC13826_0063"/>
<dbReference type="eggNOG" id="COG0130">
    <property type="taxonomic scope" value="Bacteria"/>
</dbReference>
<dbReference type="HOGENOM" id="CLU_032087_2_0_7"/>
<dbReference type="OrthoDB" id="9802309at2"/>
<dbReference type="Proteomes" id="UP000001121">
    <property type="component" value="Chromosome"/>
</dbReference>
<dbReference type="GO" id="GO:0003723">
    <property type="term" value="F:RNA binding"/>
    <property type="evidence" value="ECO:0007669"/>
    <property type="project" value="InterPro"/>
</dbReference>
<dbReference type="GO" id="GO:0160148">
    <property type="term" value="F:tRNA pseudouridine(55) synthase activity"/>
    <property type="evidence" value="ECO:0007669"/>
    <property type="project" value="UniProtKB-EC"/>
</dbReference>
<dbReference type="GO" id="GO:1990481">
    <property type="term" value="P:mRNA pseudouridine synthesis"/>
    <property type="evidence" value="ECO:0007669"/>
    <property type="project" value="TreeGrafter"/>
</dbReference>
<dbReference type="GO" id="GO:0031119">
    <property type="term" value="P:tRNA pseudouridine synthesis"/>
    <property type="evidence" value="ECO:0007669"/>
    <property type="project" value="UniProtKB-UniRule"/>
</dbReference>
<dbReference type="Gene3D" id="3.30.2350.10">
    <property type="entry name" value="Pseudouridine synthase"/>
    <property type="match status" value="1"/>
</dbReference>
<dbReference type="HAMAP" id="MF_01080">
    <property type="entry name" value="TruB_bact"/>
    <property type="match status" value="1"/>
</dbReference>
<dbReference type="InterPro" id="IPR020103">
    <property type="entry name" value="PsdUridine_synth_cat_dom_sf"/>
</dbReference>
<dbReference type="InterPro" id="IPR002501">
    <property type="entry name" value="PsdUridine_synth_N"/>
</dbReference>
<dbReference type="InterPro" id="IPR014780">
    <property type="entry name" value="tRNA_psdUridine_synth_TruB"/>
</dbReference>
<dbReference type="NCBIfam" id="TIGR00431">
    <property type="entry name" value="TruB"/>
    <property type="match status" value="1"/>
</dbReference>
<dbReference type="PANTHER" id="PTHR13767:SF2">
    <property type="entry name" value="PSEUDOURIDYLATE SYNTHASE TRUB1"/>
    <property type="match status" value="1"/>
</dbReference>
<dbReference type="PANTHER" id="PTHR13767">
    <property type="entry name" value="TRNA-PSEUDOURIDINE SYNTHASE"/>
    <property type="match status" value="1"/>
</dbReference>
<dbReference type="Pfam" id="PF01509">
    <property type="entry name" value="TruB_N"/>
    <property type="match status" value="1"/>
</dbReference>
<dbReference type="SUPFAM" id="SSF55120">
    <property type="entry name" value="Pseudouridine synthase"/>
    <property type="match status" value="1"/>
</dbReference>
<feature type="chain" id="PRO_1000084562" description="tRNA pseudouridine synthase B">
    <location>
        <begin position="1"/>
        <end position="273"/>
    </location>
</feature>
<feature type="active site" description="Nucleophile" evidence="1">
    <location>
        <position position="38"/>
    </location>
</feature>
<keyword id="KW-0413">Isomerase</keyword>
<keyword id="KW-0819">tRNA processing</keyword>
<comment type="function">
    <text evidence="1">Responsible for synthesis of pseudouridine from uracil-55 in the psi GC loop of transfer RNAs.</text>
</comment>
<comment type="catalytic activity">
    <reaction evidence="1">
        <text>uridine(55) in tRNA = pseudouridine(55) in tRNA</text>
        <dbReference type="Rhea" id="RHEA:42532"/>
        <dbReference type="Rhea" id="RHEA-COMP:10101"/>
        <dbReference type="Rhea" id="RHEA-COMP:10102"/>
        <dbReference type="ChEBI" id="CHEBI:65314"/>
        <dbReference type="ChEBI" id="CHEBI:65315"/>
        <dbReference type="EC" id="5.4.99.25"/>
    </reaction>
</comment>
<comment type="similarity">
    <text evidence="1">Belongs to the pseudouridine synthase TruB family. Type 1 subfamily.</text>
</comment>
<organism>
    <name type="scientific">Campylobacter concisus (strain 13826)</name>
    <dbReference type="NCBI Taxonomy" id="360104"/>
    <lineage>
        <taxon>Bacteria</taxon>
        <taxon>Pseudomonadati</taxon>
        <taxon>Campylobacterota</taxon>
        <taxon>Epsilonproteobacteria</taxon>
        <taxon>Campylobacterales</taxon>
        <taxon>Campylobacteraceae</taxon>
        <taxon>Campylobacter</taxon>
    </lineage>
</organism>
<proteinExistence type="inferred from homology"/>
<name>TRUB_CAMC1</name>
<sequence>MNAIFVANKPAGMSSNHFLGRLKRKYGVKKAGFSGTLDPFASGCLIVAFGSYTKFFRFLDKSPKVYEATIWLGASSPSMDNENITEISNVKELNLEKLEAIRGELIGKISYIPPKFSAKHVNGTRAYKLARSGEEFELKPEIMEIYESEILNYSHPFLTLRLSVSEGSYIRSYAEIFGQKVGYNVTLSSLKRVSEGKFRYENEKFLNICNFLNIEQNTYFGDINNILDGKELKINDFETQTQGIYLLNYDKFMSVIQIMDDTINYTLNKVEKC</sequence>